<dbReference type="EMBL" id="CP000026">
    <property type="protein sequence ID" value="AAV79698.1"/>
    <property type="molecule type" value="Genomic_DNA"/>
</dbReference>
<dbReference type="RefSeq" id="WP_001293360.1">
    <property type="nucleotide sequence ID" value="NC_006511.1"/>
</dbReference>
<dbReference type="SMR" id="Q5PIR9"/>
<dbReference type="KEGG" id="spt:SPA3934"/>
<dbReference type="HOGENOM" id="CLU_033123_0_0_6"/>
<dbReference type="Proteomes" id="UP000008185">
    <property type="component" value="Chromosome"/>
</dbReference>
<dbReference type="GO" id="GO:0009376">
    <property type="term" value="C:HslUV protease complex"/>
    <property type="evidence" value="ECO:0007669"/>
    <property type="project" value="UniProtKB-UniRule"/>
</dbReference>
<dbReference type="GO" id="GO:0005524">
    <property type="term" value="F:ATP binding"/>
    <property type="evidence" value="ECO:0007669"/>
    <property type="project" value="UniProtKB-UniRule"/>
</dbReference>
<dbReference type="GO" id="GO:0016887">
    <property type="term" value="F:ATP hydrolysis activity"/>
    <property type="evidence" value="ECO:0007669"/>
    <property type="project" value="InterPro"/>
</dbReference>
<dbReference type="GO" id="GO:0008233">
    <property type="term" value="F:peptidase activity"/>
    <property type="evidence" value="ECO:0007669"/>
    <property type="project" value="InterPro"/>
</dbReference>
<dbReference type="GO" id="GO:0036402">
    <property type="term" value="F:proteasome-activating activity"/>
    <property type="evidence" value="ECO:0007669"/>
    <property type="project" value="UniProtKB-UniRule"/>
</dbReference>
<dbReference type="GO" id="GO:0043335">
    <property type="term" value="P:protein unfolding"/>
    <property type="evidence" value="ECO:0007669"/>
    <property type="project" value="UniProtKB-UniRule"/>
</dbReference>
<dbReference type="GO" id="GO:0051603">
    <property type="term" value="P:proteolysis involved in protein catabolic process"/>
    <property type="evidence" value="ECO:0007669"/>
    <property type="project" value="TreeGrafter"/>
</dbReference>
<dbReference type="CDD" id="cd19498">
    <property type="entry name" value="RecA-like_HslU"/>
    <property type="match status" value="1"/>
</dbReference>
<dbReference type="FunFam" id="1.10.8.10:FF:000012">
    <property type="entry name" value="ATP-dependent protease ATPase subunit HslU"/>
    <property type="match status" value="1"/>
</dbReference>
<dbReference type="FunFam" id="1.10.8.10:FF:000028">
    <property type="entry name" value="ATP-dependent protease ATPase subunit HslU"/>
    <property type="match status" value="1"/>
</dbReference>
<dbReference type="FunFam" id="1.10.8.60:FF:000027">
    <property type="entry name" value="ATP-dependent protease ATPase subunit HslU"/>
    <property type="match status" value="1"/>
</dbReference>
<dbReference type="FunFam" id="3.40.50.300:FF:000213">
    <property type="entry name" value="ATP-dependent protease ATPase subunit HslU"/>
    <property type="match status" value="1"/>
</dbReference>
<dbReference type="FunFam" id="3.40.50.300:FF:000220">
    <property type="entry name" value="ATP-dependent protease ATPase subunit HslU"/>
    <property type="match status" value="1"/>
</dbReference>
<dbReference type="Gene3D" id="1.10.8.60">
    <property type="match status" value="1"/>
</dbReference>
<dbReference type="Gene3D" id="1.10.8.10">
    <property type="entry name" value="DNA helicase RuvA subunit, C-terminal domain"/>
    <property type="match status" value="2"/>
</dbReference>
<dbReference type="Gene3D" id="3.40.50.300">
    <property type="entry name" value="P-loop containing nucleotide triphosphate hydrolases"/>
    <property type="match status" value="1"/>
</dbReference>
<dbReference type="HAMAP" id="MF_00249">
    <property type="entry name" value="HslU"/>
    <property type="match status" value="1"/>
</dbReference>
<dbReference type="InterPro" id="IPR003593">
    <property type="entry name" value="AAA+_ATPase"/>
</dbReference>
<dbReference type="InterPro" id="IPR050052">
    <property type="entry name" value="ATP-dep_Clp_protease_ClpX"/>
</dbReference>
<dbReference type="InterPro" id="IPR003959">
    <property type="entry name" value="ATPase_AAA_core"/>
</dbReference>
<dbReference type="InterPro" id="IPR019489">
    <property type="entry name" value="Clp_ATPase_C"/>
</dbReference>
<dbReference type="InterPro" id="IPR004491">
    <property type="entry name" value="HslU"/>
</dbReference>
<dbReference type="InterPro" id="IPR027417">
    <property type="entry name" value="P-loop_NTPase"/>
</dbReference>
<dbReference type="NCBIfam" id="TIGR00390">
    <property type="entry name" value="hslU"/>
    <property type="match status" value="1"/>
</dbReference>
<dbReference type="NCBIfam" id="NF003544">
    <property type="entry name" value="PRK05201.1"/>
    <property type="match status" value="1"/>
</dbReference>
<dbReference type="PANTHER" id="PTHR48102">
    <property type="entry name" value="ATP-DEPENDENT CLP PROTEASE ATP-BINDING SUBUNIT CLPX-LIKE, MITOCHONDRIAL-RELATED"/>
    <property type="match status" value="1"/>
</dbReference>
<dbReference type="PANTHER" id="PTHR48102:SF3">
    <property type="entry name" value="ATP-DEPENDENT PROTEASE ATPASE SUBUNIT HSLU"/>
    <property type="match status" value="1"/>
</dbReference>
<dbReference type="Pfam" id="PF00004">
    <property type="entry name" value="AAA"/>
    <property type="match status" value="1"/>
</dbReference>
<dbReference type="Pfam" id="PF07724">
    <property type="entry name" value="AAA_2"/>
    <property type="match status" value="1"/>
</dbReference>
<dbReference type="SMART" id="SM00382">
    <property type="entry name" value="AAA"/>
    <property type="match status" value="1"/>
</dbReference>
<dbReference type="SMART" id="SM01086">
    <property type="entry name" value="ClpB_D2-small"/>
    <property type="match status" value="1"/>
</dbReference>
<dbReference type="SUPFAM" id="SSF52540">
    <property type="entry name" value="P-loop containing nucleoside triphosphate hydrolases"/>
    <property type="match status" value="1"/>
</dbReference>
<gene>
    <name evidence="1" type="primary">hslU</name>
    <name type="ordered locus">SPA3934</name>
</gene>
<evidence type="ECO:0000255" key="1">
    <source>
        <dbReference type="HAMAP-Rule" id="MF_00249"/>
    </source>
</evidence>
<name>HSLU_SALPA</name>
<comment type="function">
    <text evidence="1">ATPase subunit of a proteasome-like degradation complex; this subunit has chaperone activity. The binding of ATP and its subsequent hydrolysis by HslU are essential for unfolding of protein substrates subsequently hydrolyzed by HslV. HslU recognizes the N-terminal part of its protein substrates and unfolds these before they are guided to HslV for hydrolysis.</text>
</comment>
<comment type="subunit">
    <text evidence="1">A double ring-shaped homohexamer of HslV is capped on each side by a ring-shaped HslU homohexamer. The assembly of the HslU/HslV complex is dependent on binding of ATP.</text>
</comment>
<comment type="subcellular location">
    <subcellularLocation>
        <location evidence="1">Cytoplasm</location>
    </subcellularLocation>
</comment>
<comment type="induction">
    <text evidence="1">By heat shock.</text>
</comment>
<comment type="similarity">
    <text evidence="1">Belongs to the ClpX chaperone family. HslU subfamily.</text>
</comment>
<organism>
    <name type="scientific">Salmonella paratyphi A (strain ATCC 9150 / SARB42)</name>
    <dbReference type="NCBI Taxonomy" id="295319"/>
    <lineage>
        <taxon>Bacteria</taxon>
        <taxon>Pseudomonadati</taxon>
        <taxon>Pseudomonadota</taxon>
        <taxon>Gammaproteobacteria</taxon>
        <taxon>Enterobacterales</taxon>
        <taxon>Enterobacteriaceae</taxon>
        <taxon>Salmonella</taxon>
    </lineage>
</organism>
<sequence length="443" mass="49668">MSEMTPREIVSELNKHIIGQDNAKRSVAIALRNRWRRMQLDEELRHEVTPKNILMIGPTGVGKTEIARRLAKLANAPFIKVEATKFTEVGYVGKEVDSIIRDLTDAAVKMVRVQAIEKNRYRAEELAEERILDVLIPPAKNNWGQAEQQQEPSAARQTFRKKLREGQLDDKEIEINLAAAPMGVEIMAPPGMEEMTSQLQSMFQNLGGQKQKPRKLKIKDAMKLLVEEEAAKLVNPEELKQDAIDAVEQHGIVFIDEIDKICKRGETSGPDVSREGVQRDLLPLVEGCTVSTKHGMVKTDHILFIASGAFQVAKPSDLIPELQGRLPIRVELQALTTSDFERILTEPNASVTVQYKALMATEGVNIEFTDSGIKRIAEAAWQVNETTENIGARRLHTVLERLMEEISYNASDLHGQNITIDAEYVSKHLDALVADEDLSRFIL</sequence>
<feature type="chain" id="PRO_0000160541" description="ATP-dependent protease ATPase subunit HslU">
    <location>
        <begin position="1"/>
        <end position="443"/>
    </location>
</feature>
<feature type="binding site" evidence="1">
    <location>
        <position position="18"/>
    </location>
    <ligand>
        <name>ATP</name>
        <dbReference type="ChEBI" id="CHEBI:30616"/>
    </ligand>
</feature>
<feature type="binding site" evidence="1">
    <location>
        <begin position="60"/>
        <end position="65"/>
    </location>
    <ligand>
        <name>ATP</name>
        <dbReference type="ChEBI" id="CHEBI:30616"/>
    </ligand>
</feature>
<feature type="binding site" evidence="1">
    <location>
        <position position="256"/>
    </location>
    <ligand>
        <name>ATP</name>
        <dbReference type="ChEBI" id="CHEBI:30616"/>
    </ligand>
</feature>
<feature type="binding site" evidence="1">
    <location>
        <position position="321"/>
    </location>
    <ligand>
        <name>ATP</name>
        <dbReference type="ChEBI" id="CHEBI:30616"/>
    </ligand>
</feature>
<feature type="binding site" evidence="1">
    <location>
        <position position="393"/>
    </location>
    <ligand>
        <name>ATP</name>
        <dbReference type="ChEBI" id="CHEBI:30616"/>
    </ligand>
</feature>
<protein>
    <recommendedName>
        <fullName evidence="1">ATP-dependent protease ATPase subunit HslU</fullName>
    </recommendedName>
    <alternativeName>
        <fullName evidence="1">Heat shock protein HslU</fullName>
    </alternativeName>
    <alternativeName>
        <fullName evidence="1">Unfoldase HslU</fullName>
    </alternativeName>
</protein>
<reference key="1">
    <citation type="journal article" date="2004" name="Nat. Genet.">
        <title>Comparison of genome degradation in Paratyphi A and Typhi, human-restricted serovars of Salmonella enterica that cause typhoid.</title>
        <authorList>
            <person name="McClelland M."/>
            <person name="Sanderson K.E."/>
            <person name="Clifton S.W."/>
            <person name="Latreille P."/>
            <person name="Porwollik S."/>
            <person name="Sabo A."/>
            <person name="Meyer R."/>
            <person name="Bieri T."/>
            <person name="Ozersky P."/>
            <person name="McLellan M."/>
            <person name="Harkins C.R."/>
            <person name="Wang C."/>
            <person name="Nguyen C."/>
            <person name="Berghoff A."/>
            <person name="Elliott G."/>
            <person name="Kohlberg S."/>
            <person name="Strong C."/>
            <person name="Du F."/>
            <person name="Carter J."/>
            <person name="Kremizki C."/>
            <person name="Layman D."/>
            <person name="Leonard S."/>
            <person name="Sun H."/>
            <person name="Fulton L."/>
            <person name="Nash W."/>
            <person name="Miner T."/>
            <person name="Minx P."/>
            <person name="Delehaunty K."/>
            <person name="Fronick C."/>
            <person name="Magrini V."/>
            <person name="Nhan M."/>
            <person name="Warren W."/>
            <person name="Florea L."/>
            <person name="Spieth J."/>
            <person name="Wilson R.K."/>
        </authorList>
    </citation>
    <scope>NUCLEOTIDE SEQUENCE [LARGE SCALE GENOMIC DNA]</scope>
    <source>
        <strain>ATCC 9150 / SARB42</strain>
    </source>
</reference>
<keyword id="KW-0067">ATP-binding</keyword>
<keyword id="KW-0143">Chaperone</keyword>
<keyword id="KW-0963">Cytoplasm</keyword>
<keyword id="KW-0547">Nucleotide-binding</keyword>
<keyword id="KW-0346">Stress response</keyword>
<accession>Q5PIR9</accession>
<proteinExistence type="inferred from homology"/>